<proteinExistence type="inferred from homology"/>
<protein>
    <recommendedName>
        <fullName>Autoinducer 2 import system permease protein LsrD</fullName>
        <shortName>AI-2 import system permease protein LsrD</shortName>
    </recommendedName>
</protein>
<dbReference type="EMBL" id="CP000647">
    <property type="protein sequence ID" value="ABR78900.1"/>
    <property type="molecule type" value="Genomic_DNA"/>
</dbReference>
<dbReference type="RefSeq" id="WP_015959042.1">
    <property type="nucleotide sequence ID" value="NC_009648.1"/>
</dbReference>
<dbReference type="STRING" id="272620.KPN_03505"/>
<dbReference type="PaxDb" id="272620-KPN_03505"/>
<dbReference type="EnsemblBacteria" id="ABR78900">
    <property type="protein sequence ID" value="ABR78900"/>
    <property type="gene ID" value="KPN_03505"/>
</dbReference>
<dbReference type="KEGG" id="kpn:KPN_03505"/>
<dbReference type="HOGENOM" id="CLU_028880_0_0_6"/>
<dbReference type="Proteomes" id="UP000000265">
    <property type="component" value="Chromosome"/>
</dbReference>
<dbReference type="GO" id="GO:0005886">
    <property type="term" value="C:plasma membrane"/>
    <property type="evidence" value="ECO:0007669"/>
    <property type="project" value="UniProtKB-SubCell"/>
</dbReference>
<dbReference type="GO" id="GO:0022857">
    <property type="term" value="F:transmembrane transporter activity"/>
    <property type="evidence" value="ECO:0007669"/>
    <property type="project" value="InterPro"/>
</dbReference>
<dbReference type="CDD" id="cd06579">
    <property type="entry name" value="TM_PBP1_transp_AraH_like"/>
    <property type="match status" value="1"/>
</dbReference>
<dbReference type="InterPro" id="IPR001851">
    <property type="entry name" value="ABC_transp_permease"/>
</dbReference>
<dbReference type="NCBIfam" id="NF011612">
    <property type="entry name" value="PRK15038.1"/>
    <property type="match status" value="1"/>
</dbReference>
<dbReference type="PANTHER" id="PTHR32196">
    <property type="entry name" value="ABC TRANSPORTER PERMEASE PROTEIN YPHD-RELATED-RELATED"/>
    <property type="match status" value="1"/>
</dbReference>
<dbReference type="PANTHER" id="PTHR32196:SF71">
    <property type="entry name" value="AUTOINDUCER 2 IMPORT SYSTEM PERMEASE PROTEIN LSRD"/>
    <property type="match status" value="1"/>
</dbReference>
<dbReference type="Pfam" id="PF02653">
    <property type="entry name" value="BPD_transp_2"/>
    <property type="match status" value="1"/>
</dbReference>
<evidence type="ECO:0000250" key="1"/>
<evidence type="ECO:0000255" key="2"/>
<evidence type="ECO:0000305" key="3"/>
<accession>A6TEB6</accession>
<organism>
    <name type="scientific">Klebsiella pneumoniae subsp. pneumoniae (strain ATCC 700721 / MGH 78578)</name>
    <dbReference type="NCBI Taxonomy" id="272620"/>
    <lineage>
        <taxon>Bacteria</taxon>
        <taxon>Pseudomonadati</taxon>
        <taxon>Pseudomonadota</taxon>
        <taxon>Gammaproteobacteria</taxon>
        <taxon>Enterobacterales</taxon>
        <taxon>Enterobacteriaceae</taxon>
        <taxon>Klebsiella/Raoultella group</taxon>
        <taxon>Klebsiella</taxon>
        <taxon>Klebsiella pneumoniae complex</taxon>
    </lineage>
</organism>
<keyword id="KW-0997">Cell inner membrane</keyword>
<keyword id="KW-1003">Cell membrane</keyword>
<keyword id="KW-0472">Membrane</keyword>
<keyword id="KW-0812">Transmembrane</keyword>
<keyword id="KW-1133">Transmembrane helix</keyword>
<keyword id="KW-0813">Transport</keyword>
<sequence length="332" mass="34804">MKLKLNWESALLALLIAEILLFGALNPRMLDINMLLFSTSDFICIGIVALPLTLVIISGGIDISLGSTIGLCAIALGVMTQAGWPLWLAVSLTLLLGLLCGLFNAALIHYTGINPLVITLGTLYLYGGGALLLSGMAGATGYEGIGGFPDSFTAFANLTLGGLPLPLVLFAIITFFFWLLAHRGRFGRHLFLLGQNPRAARYAALSVNGIPYVLYGLVGVASAVAALVMVSYFGSARSDLGRDLLMPALTAAVLGGANIYGGSGSILGTALAALLVGYLQQGLQMVGIPNQVSSALSGALLVVVVMGRSLSLHREWVRATWRRLFSHKTIGA</sequence>
<feature type="chain" id="PRO_0000351369" description="Autoinducer 2 import system permease protein LsrD">
    <location>
        <begin position="1"/>
        <end position="332"/>
    </location>
</feature>
<feature type="transmembrane region" description="Helical" evidence="2">
    <location>
        <begin position="5"/>
        <end position="25"/>
    </location>
</feature>
<feature type="transmembrane region" description="Helical" evidence="2">
    <location>
        <begin position="43"/>
        <end position="63"/>
    </location>
</feature>
<feature type="transmembrane region" description="Helical" evidence="2">
    <location>
        <begin position="83"/>
        <end position="103"/>
    </location>
</feature>
<feature type="transmembrane region" description="Helical" evidence="2">
    <location>
        <begin position="116"/>
        <end position="136"/>
    </location>
</feature>
<feature type="transmembrane region" description="Helical" evidence="2">
    <location>
        <begin position="160"/>
        <end position="180"/>
    </location>
</feature>
<feature type="transmembrane region" description="Helical" evidence="2">
    <location>
        <begin position="210"/>
        <end position="230"/>
    </location>
</feature>
<feature type="transmembrane region" description="Helical" evidence="2">
    <location>
        <begin position="259"/>
        <end position="279"/>
    </location>
</feature>
<gene>
    <name type="primary">lsrD</name>
    <name type="ordered locus">KPN78578_34760</name>
    <name type="ORF">KPN_03505</name>
</gene>
<comment type="function">
    <text evidence="1">Part of the ABC transporter complex LsrABCD involved in autoinducer 2 (AI-2) import. Probably responsible for the translocation of the substrate across the membrane (By similarity).</text>
</comment>
<comment type="subunit">
    <text evidence="1">The complex is composed of two ATP-binding proteins (LsrA), two transmembrane proteins (LsrC and LsrD) and a solute-binding protein (LsrB).</text>
</comment>
<comment type="subcellular location">
    <subcellularLocation>
        <location evidence="1">Cell inner membrane</location>
        <topology evidence="1">Multi-pass membrane protein</topology>
    </subcellularLocation>
</comment>
<comment type="similarity">
    <text evidence="3">Belongs to the binding-protein-dependent transport system permease family. AraH/RbsC subfamily.</text>
</comment>
<reference key="1">
    <citation type="submission" date="2006-09" db="EMBL/GenBank/DDBJ databases">
        <authorList>
            <consortium name="The Klebsiella pneumonia Genome Sequencing Project"/>
            <person name="McClelland M."/>
            <person name="Sanderson E.K."/>
            <person name="Spieth J."/>
            <person name="Clifton W.S."/>
            <person name="Latreille P."/>
            <person name="Sabo A."/>
            <person name="Pepin K."/>
            <person name="Bhonagiri V."/>
            <person name="Porwollik S."/>
            <person name="Ali J."/>
            <person name="Wilson R.K."/>
        </authorList>
    </citation>
    <scope>NUCLEOTIDE SEQUENCE [LARGE SCALE GENOMIC DNA]</scope>
    <source>
        <strain>ATCC 700721 / MGH 78578</strain>
    </source>
</reference>
<name>LSRD_KLEP7</name>